<keyword id="KW-0028">Amino-acid biosynthesis</keyword>
<keyword id="KW-0963">Cytoplasm</keyword>
<keyword id="KW-0368">Histidine biosynthesis</keyword>
<keyword id="KW-0378">Hydrolase</keyword>
<keyword id="KW-0460">Magnesium</keyword>
<keyword id="KW-0479">Metal-binding</keyword>
<keyword id="KW-1185">Reference proteome</keyword>
<keyword id="KW-0862">Zinc</keyword>
<sequence length="131" mass="15119">MYQRDGNHTMITIKFDEKGLVPVIAQDKTTKDVLMLAYANKEAVDLTRSTGYAHYYSRSRNKLWKKGEESGHLQKVHEILVDCDEDAVIYLVDQLTAACHTGYRSCFYRRLDGTVSGERMFDPDEVYKKSE</sequence>
<accession>Q2FPA4</accession>
<organism>
    <name type="scientific">Methanospirillum hungatei JF-1 (strain ATCC 27890 / DSM 864 / NBRC 100397 / JF-1)</name>
    <dbReference type="NCBI Taxonomy" id="323259"/>
    <lineage>
        <taxon>Archaea</taxon>
        <taxon>Methanobacteriati</taxon>
        <taxon>Methanobacteriota</taxon>
        <taxon>Stenosarchaea group</taxon>
        <taxon>Methanomicrobia</taxon>
        <taxon>Methanomicrobiales</taxon>
        <taxon>Methanospirillaceae</taxon>
        <taxon>Methanospirillum</taxon>
    </lineage>
</organism>
<gene>
    <name evidence="1" type="primary">hisI</name>
    <name type="ordered locus">Mhun_2051</name>
</gene>
<name>HIS3_METHJ</name>
<feature type="chain" id="PRO_0000319734" description="Phosphoribosyl-AMP cyclohydrolase">
    <location>
        <begin position="1"/>
        <end position="131"/>
    </location>
</feature>
<feature type="binding site" evidence="1">
    <location>
        <position position="82"/>
    </location>
    <ligand>
        <name>Mg(2+)</name>
        <dbReference type="ChEBI" id="CHEBI:18420"/>
    </ligand>
</feature>
<feature type="binding site" evidence="1">
    <location>
        <position position="83"/>
    </location>
    <ligand>
        <name>Zn(2+)</name>
        <dbReference type="ChEBI" id="CHEBI:29105"/>
        <note>ligand shared between dimeric partners</note>
    </ligand>
</feature>
<feature type="binding site" evidence="1">
    <location>
        <position position="84"/>
    </location>
    <ligand>
        <name>Mg(2+)</name>
        <dbReference type="ChEBI" id="CHEBI:18420"/>
    </ligand>
</feature>
<feature type="binding site" evidence="1">
    <location>
        <position position="86"/>
    </location>
    <ligand>
        <name>Mg(2+)</name>
        <dbReference type="ChEBI" id="CHEBI:18420"/>
    </ligand>
</feature>
<feature type="binding site" evidence="1">
    <location>
        <position position="99"/>
    </location>
    <ligand>
        <name>Zn(2+)</name>
        <dbReference type="ChEBI" id="CHEBI:29105"/>
        <note>ligand shared between dimeric partners</note>
    </ligand>
</feature>
<feature type="binding site" evidence="1">
    <location>
        <position position="106"/>
    </location>
    <ligand>
        <name>Zn(2+)</name>
        <dbReference type="ChEBI" id="CHEBI:29105"/>
        <note>ligand shared between dimeric partners</note>
    </ligand>
</feature>
<dbReference type="EC" id="3.5.4.19" evidence="1"/>
<dbReference type="EMBL" id="CP000254">
    <property type="protein sequence ID" value="ABD41759.1"/>
    <property type="molecule type" value="Genomic_DNA"/>
</dbReference>
<dbReference type="SMR" id="Q2FPA4"/>
<dbReference type="FunCoup" id="Q2FPA4">
    <property type="interactions" value="71"/>
</dbReference>
<dbReference type="STRING" id="323259.Mhun_2051"/>
<dbReference type="EnsemblBacteria" id="ABD41759">
    <property type="protein sequence ID" value="ABD41759"/>
    <property type="gene ID" value="Mhun_2051"/>
</dbReference>
<dbReference type="KEGG" id="mhu:Mhun_2051"/>
<dbReference type="eggNOG" id="arCOG02676">
    <property type="taxonomic scope" value="Archaea"/>
</dbReference>
<dbReference type="HOGENOM" id="CLU_048577_5_0_2"/>
<dbReference type="InParanoid" id="Q2FPA4"/>
<dbReference type="UniPathway" id="UPA00031">
    <property type="reaction ID" value="UER00008"/>
</dbReference>
<dbReference type="Proteomes" id="UP000001941">
    <property type="component" value="Chromosome"/>
</dbReference>
<dbReference type="GO" id="GO:0005737">
    <property type="term" value="C:cytoplasm"/>
    <property type="evidence" value="ECO:0007669"/>
    <property type="project" value="UniProtKB-SubCell"/>
</dbReference>
<dbReference type="GO" id="GO:0000287">
    <property type="term" value="F:magnesium ion binding"/>
    <property type="evidence" value="ECO:0007669"/>
    <property type="project" value="UniProtKB-UniRule"/>
</dbReference>
<dbReference type="GO" id="GO:0004635">
    <property type="term" value="F:phosphoribosyl-AMP cyclohydrolase activity"/>
    <property type="evidence" value="ECO:0007669"/>
    <property type="project" value="UniProtKB-UniRule"/>
</dbReference>
<dbReference type="GO" id="GO:0008270">
    <property type="term" value="F:zinc ion binding"/>
    <property type="evidence" value="ECO:0007669"/>
    <property type="project" value="UniProtKB-UniRule"/>
</dbReference>
<dbReference type="GO" id="GO:0000105">
    <property type="term" value="P:L-histidine biosynthetic process"/>
    <property type="evidence" value="ECO:0007669"/>
    <property type="project" value="UniProtKB-UniRule"/>
</dbReference>
<dbReference type="FunFam" id="3.10.20.810:FF:000001">
    <property type="entry name" value="Histidine biosynthesis bifunctional protein HisIE"/>
    <property type="match status" value="1"/>
</dbReference>
<dbReference type="Gene3D" id="4.10.80.70">
    <property type="match status" value="1"/>
</dbReference>
<dbReference type="Gene3D" id="3.10.20.810">
    <property type="entry name" value="Phosphoribosyl-AMP cyclohydrolase"/>
    <property type="match status" value="1"/>
</dbReference>
<dbReference type="HAMAP" id="MF_01021">
    <property type="entry name" value="HisI"/>
    <property type="match status" value="1"/>
</dbReference>
<dbReference type="InterPro" id="IPR026660">
    <property type="entry name" value="PRA-CH"/>
</dbReference>
<dbReference type="InterPro" id="IPR002496">
    <property type="entry name" value="PRib_AMP_CycHydrolase_dom"/>
</dbReference>
<dbReference type="InterPro" id="IPR038019">
    <property type="entry name" value="PRib_AMP_CycHydrolase_sf"/>
</dbReference>
<dbReference type="NCBIfam" id="NF000768">
    <property type="entry name" value="PRK00051.1"/>
    <property type="match status" value="1"/>
</dbReference>
<dbReference type="PANTHER" id="PTHR42945">
    <property type="entry name" value="HISTIDINE BIOSYNTHESIS BIFUNCTIONAL PROTEIN"/>
    <property type="match status" value="1"/>
</dbReference>
<dbReference type="PANTHER" id="PTHR42945:SF1">
    <property type="entry name" value="HISTIDINE BIOSYNTHESIS BIFUNCTIONAL PROTEIN HIS7"/>
    <property type="match status" value="1"/>
</dbReference>
<dbReference type="Pfam" id="PF01502">
    <property type="entry name" value="PRA-CH"/>
    <property type="match status" value="1"/>
</dbReference>
<dbReference type="SUPFAM" id="SSF141734">
    <property type="entry name" value="HisI-like"/>
    <property type="match status" value="1"/>
</dbReference>
<proteinExistence type="inferred from homology"/>
<reference key="1">
    <citation type="journal article" date="2016" name="Stand. Genomic Sci.">
        <title>Complete genome sequence of Methanospirillum hungatei type strain JF1.</title>
        <authorList>
            <person name="Gunsalus R.P."/>
            <person name="Cook L.E."/>
            <person name="Crable B."/>
            <person name="Rohlin L."/>
            <person name="McDonald E."/>
            <person name="Mouttaki H."/>
            <person name="Sieber J.R."/>
            <person name="Poweleit N."/>
            <person name="Zhou H."/>
            <person name="Lapidus A.L."/>
            <person name="Daligault H.E."/>
            <person name="Land M."/>
            <person name="Gilna P."/>
            <person name="Ivanova N."/>
            <person name="Kyrpides N."/>
            <person name="Culley D.E."/>
            <person name="McInerney M.J."/>
        </authorList>
    </citation>
    <scope>NUCLEOTIDE SEQUENCE [LARGE SCALE GENOMIC DNA]</scope>
    <source>
        <strain>ATCC 27890 / DSM 864 / NBRC 100397 / JF-1</strain>
    </source>
</reference>
<evidence type="ECO:0000255" key="1">
    <source>
        <dbReference type="HAMAP-Rule" id="MF_01021"/>
    </source>
</evidence>
<comment type="function">
    <text evidence="1">Catalyzes the hydrolysis of the adenine ring of phosphoribosyl-AMP.</text>
</comment>
<comment type="catalytic activity">
    <reaction evidence="1">
        <text>1-(5-phospho-beta-D-ribosyl)-5'-AMP + H2O = 1-(5-phospho-beta-D-ribosyl)-5-[(5-phospho-beta-D-ribosylamino)methylideneamino]imidazole-4-carboxamide</text>
        <dbReference type="Rhea" id="RHEA:20049"/>
        <dbReference type="ChEBI" id="CHEBI:15377"/>
        <dbReference type="ChEBI" id="CHEBI:58435"/>
        <dbReference type="ChEBI" id="CHEBI:59457"/>
        <dbReference type="EC" id="3.5.4.19"/>
    </reaction>
</comment>
<comment type="cofactor">
    <cofactor evidence="1">
        <name>Mg(2+)</name>
        <dbReference type="ChEBI" id="CHEBI:18420"/>
    </cofactor>
    <text evidence="1">Binds 1 Mg(2+) ion per subunit.</text>
</comment>
<comment type="cofactor">
    <cofactor evidence="1">
        <name>Zn(2+)</name>
        <dbReference type="ChEBI" id="CHEBI:29105"/>
    </cofactor>
    <text evidence="1">Binds 1 zinc ion per subunit.</text>
</comment>
<comment type="pathway">
    <text evidence="1">Amino-acid biosynthesis; L-histidine biosynthesis; L-histidine from 5-phospho-alpha-D-ribose 1-diphosphate: step 3/9.</text>
</comment>
<comment type="subunit">
    <text evidence="1">Homodimer.</text>
</comment>
<comment type="subcellular location">
    <subcellularLocation>
        <location evidence="1">Cytoplasm</location>
    </subcellularLocation>
</comment>
<comment type="similarity">
    <text evidence="1">Belongs to the PRA-CH family.</text>
</comment>
<protein>
    <recommendedName>
        <fullName evidence="1">Phosphoribosyl-AMP cyclohydrolase</fullName>
        <shortName evidence="1">PRA-CH</shortName>
        <ecNumber evidence="1">3.5.4.19</ecNumber>
    </recommendedName>
</protein>